<reference key="1">
    <citation type="journal article" date="2010" name="Genome Biol.">
        <title>Structure and dynamics of the pan-genome of Streptococcus pneumoniae and closely related species.</title>
        <authorList>
            <person name="Donati C."/>
            <person name="Hiller N.L."/>
            <person name="Tettelin H."/>
            <person name="Muzzi A."/>
            <person name="Croucher N.J."/>
            <person name="Angiuoli S.V."/>
            <person name="Oggioni M."/>
            <person name="Dunning Hotopp J.C."/>
            <person name="Hu F.Z."/>
            <person name="Riley D.R."/>
            <person name="Covacci A."/>
            <person name="Mitchell T.J."/>
            <person name="Bentley S.D."/>
            <person name="Kilian M."/>
            <person name="Ehrlich G.D."/>
            <person name="Rappuoli R."/>
            <person name="Moxon E.R."/>
            <person name="Masignani V."/>
        </authorList>
    </citation>
    <scope>NUCLEOTIDE SEQUENCE [LARGE SCALE GENOMIC DNA]</scope>
    <source>
        <strain>Taiwan19F-14</strain>
    </source>
</reference>
<proteinExistence type="inferred from homology"/>
<organism>
    <name type="scientific">Streptococcus pneumoniae (strain Taiwan19F-14)</name>
    <dbReference type="NCBI Taxonomy" id="487213"/>
    <lineage>
        <taxon>Bacteria</taxon>
        <taxon>Bacillati</taxon>
        <taxon>Bacillota</taxon>
        <taxon>Bacilli</taxon>
        <taxon>Lactobacillales</taxon>
        <taxon>Streptococcaceae</taxon>
        <taxon>Streptococcus</taxon>
    </lineage>
</organism>
<evidence type="ECO:0000255" key="1">
    <source>
        <dbReference type="HAMAP-Rule" id="MF_00358"/>
    </source>
</evidence>
<evidence type="ECO:0000256" key="2">
    <source>
        <dbReference type="SAM" id="MobiDB-lite"/>
    </source>
</evidence>
<evidence type="ECO:0000305" key="3"/>
<dbReference type="EMBL" id="CP000921">
    <property type="protein sequence ID" value="ACO23371.1"/>
    <property type="molecule type" value="Genomic_DNA"/>
</dbReference>
<dbReference type="RefSeq" id="WP_000048055.1">
    <property type="nucleotide sequence ID" value="NC_012469.1"/>
</dbReference>
<dbReference type="SMR" id="C1CQU3"/>
<dbReference type="GeneID" id="45653328"/>
<dbReference type="KEGG" id="snt:SPT_0860"/>
<dbReference type="HOGENOM" id="CLU_159258_3_2_9"/>
<dbReference type="GO" id="GO:1990904">
    <property type="term" value="C:ribonucleoprotein complex"/>
    <property type="evidence" value="ECO:0007669"/>
    <property type="project" value="UniProtKB-KW"/>
</dbReference>
<dbReference type="GO" id="GO:0005840">
    <property type="term" value="C:ribosome"/>
    <property type="evidence" value="ECO:0007669"/>
    <property type="project" value="UniProtKB-KW"/>
</dbReference>
<dbReference type="GO" id="GO:0003735">
    <property type="term" value="F:structural constituent of ribosome"/>
    <property type="evidence" value="ECO:0007669"/>
    <property type="project" value="InterPro"/>
</dbReference>
<dbReference type="GO" id="GO:0006412">
    <property type="term" value="P:translation"/>
    <property type="evidence" value="ECO:0007669"/>
    <property type="project" value="UniProtKB-UniRule"/>
</dbReference>
<dbReference type="Gene3D" id="1.20.5.1150">
    <property type="entry name" value="Ribosomal protein S8"/>
    <property type="match status" value="1"/>
</dbReference>
<dbReference type="HAMAP" id="MF_00358">
    <property type="entry name" value="Ribosomal_bS21"/>
    <property type="match status" value="1"/>
</dbReference>
<dbReference type="InterPro" id="IPR001911">
    <property type="entry name" value="Ribosomal_bS21"/>
</dbReference>
<dbReference type="InterPro" id="IPR018278">
    <property type="entry name" value="Ribosomal_bS21_CS"/>
</dbReference>
<dbReference type="InterPro" id="IPR038380">
    <property type="entry name" value="Ribosomal_bS21_sf"/>
</dbReference>
<dbReference type="NCBIfam" id="TIGR00030">
    <property type="entry name" value="S21p"/>
    <property type="match status" value="1"/>
</dbReference>
<dbReference type="PANTHER" id="PTHR21109">
    <property type="entry name" value="MITOCHONDRIAL 28S RIBOSOMAL PROTEIN S21"/>
    <property type="match status" value="1"/>
</dbReference>
<dbReference type="PANTHER" id="PTHR21109:SF22">
    <property type="entry name" value="SMALL RIBOSOMAL SUBUNIT PROTEIN BS21"/>
    <property type="match status" value="1"/>
</dbReference>
<dbReference type="Pfam" id="PF01165">
    <property type="entry name" value="Ribosomal_S21"/>
    <property type="match status" value="1"/>
</dbReference>
<dbReference type="PRINTS" id="PR00976">
    <property type="entry name" value="RIBOSOMALS21"/>
</dbReference>
<dbReference type="PROSITE" id="PS01181">
    <property type="entry name" value="RIBOSOMAL_S21"/>
    <property type="match status" value="1"/>
</dbReference>
<gene>
    <name evidence="1" type="primary">rpsU</name>
    <name type="ordered locus">SPT_0860</name>
</gene>
<keyword id="KW-0687">Ribonucleoprotein</keyword>
<keyword id="KW-0689">Ribosomal protein</keyword>
<sequence>MSKTVVRKNESLDDALRRFKRAVTKAGTLQETRKREFYEKPSVKRKRKSEVARKRKKF</sequence>
<feature type="chain" id="PRO_1000133494" description="Small ribosomal subunit protein bS21">
    <location>
        <begin position="1"/>
        <end position="58"/>
    </location>
</feature>
<feature type="region of interest" description="Disordered" evidence="2">
    <location>
        <begin position="39"/>
        <end position="58"/>
    </location>
</feature>
<feature type="compositionally biased region" description="Basic residues" evidence="2">
    <location>
        <begin position="43"/>
        <end position="58"/>
    </location>
</feature>
<name>RS21_STRZT</name>
<accession>C1CQU3</accession>
<protein>
    <recommendedName>
        <fullName evidence="1">Small ribosomal subunit protein bS21</fullName>
    </recommendedName>
    <alternativeName>
        <fullName evidence="3">30S ribosomal protein S21</fullName>
    </alternativeName>
</protein>
<comment type="similarity">
    <text evidence="1">Belongs to the bacterial ribosomal protein bS21 family.</text>
</comment>